<proteinExistence type="evidence at protein level"/>
<keyword id="KW-0193">Cuticle</keyword>
<keyword id="KW-0903">Direct protein sequencing</keyword>
<keyword id="KW-1185">Reference proteome</keyword>
<keyword id="KW-0732">Signal</keyword>
<dbReference type="EMBL" id="U84746">
    <property type="protein sequence ID" value="AAB88065.1"/>
    <property type="molecule type" value="Genomic_DNA"/>
</dbReference>
<dbReference type="EMBL" id="AE014296">
    <property type="protein sequence ID" value="AAG22328.1"/>
    <property type="molecule type" value="Genomic_DNA"/>
</dbReference>
<dbReference type="EMBL" id="AY071366">
    <property type="protein sequence ID" value="AAL48988.1"/>
    <property type="molecule type" value="mRNA"/>
</dbReference>
<dbReference type="RefSeq" id="NP_788469.1">
    <property type="nucleotide sequence ID" value="NM_176291.3"/>
</dbReference>
<dbReference type="FunCoup" id="C0HL63">
    <property type="interactions" value="4"/>
</dbReference>
<dbReference type="DNASU" id="48382"/>
<dbReference type="EnsemblMetazoa" id="FBtr0076992">
    <property type="protein sequence ID" value="FBpp0076701"/>
    <property type="gene ID" value="FBgn0020643"/>
</dbReference>
<dbReference type="EnsemblMetazoa" id="FBtr0076994">
    <property type="protein sequence ID" value="FBpp0076702"/>
    <property type="gene ID" value="FBgn0020644"/>
</dbReference>
<dbReference type="GeneID" id="48381"/>
<dbReference type="GeneID" id="48382"/>
<dbReference type="KEGG" id="dme:Dmel_CG18773"/>
<dbReference type="KEGG" id="dme:Dmel_CG32400"/>
<dbReference type="AGR" id="FB:FBgn0020643"/>
<dbReference type="CTD" id="48381"/>
<dbReference type="CTD" id="48382"/>
<dbReference type="FlyBase" id="FBgn0020643">
    <property type="gene designation" value="Lcp65Ab2"/>
</dbReference>
<dbReference type="VEuPathDB" id="VectorBase:FBgn0020643"/>
<dbReference type="VEuPathDB" id="VectorBase:FBgn0020644"/>
<dbReference type="InParanoid" id="C0HL63"/>
<dbReference type="OMA" id="PPQNEVG"/>
<dbReference type="OrthoDB" id="7255276at2759"/>
<dbReference type="PRO" id="PR:C0HL63"/>
<dbReference type="Proteomes" id="UP000000803">
    <property type="component" value="Chromosome 3L"/>
</dbReference>
<dbReference type="Bgee" id="FBgn0020643">
    <property type="expression patterns" value="Expressed in larva and 3 other cell types or tissues"/>
</dbReference>
<dbReference type="GO" id="GO:0062129">
    <property type="term" value="C:chitin-based extracellular matrix"/>
    <property type="evidence" value="ECO:0000314"/>
    <property type="project" value="FlyBase"/>
</dbReference>
<dbReference type="GO" id="GO:0008010">
    <property type="term" value="F:structural constituent of chitin-based larval cuticle"/>
    <property type="evidence" value="ECO:0000314"/>
    <property type="project" value="FlyBase"/>
</dbReference>
<dbReference type="InterPro" id="IPR050468">
    <property type="entry name" value="Cuticle_Struct_Prot"/>
</dbReference>
<dbReference type="InterPro" id="IPR000618">
    <property type="entry name" value="Insect_cuticle"/>
</dbReference>
<dbReference type="PANTHER" id="PTHR10380:SF218">
    <property type="entry name" value="ADULT CUTICLE PROTEIN 65AA-RELATED"/>
    <property type="match status" value="1"/>
</dbReference>
<dbReference type="PANTHER" id="PTHR10380">
    <property type="entry name" value="CUTICLE PROTEIN"/>
    <property type="match status" value="1"/>
</dbReference>
<dbReference type="Pfam" id="PF00379">
    <property type="entry name" value="Chitin_bind_4"/>
    <property type="match status" value="1"/>
</dbReference>
<dbReference type="PROSITE" id="PS51155">
    <property type="entry name" value="CHIT_BIND_RR_2"/>
    <property type="match status" value="1"/>
</dbReference>
<reference key="1">
    <citation type="journal article" date="1997" name="Genetics">
        <title>A cluster of cuticle genes of Drosophila at 65A: sequence, structure and evolution.</title>
        <authorList>
            <person name="Charles J.-P."/>
            <person name="Chihara C."/>
            <person name="Nejad S."/>
            <person name="Riddiford L.M."/>
        </authorList>
    </citation>
    <scope>NUCLEOTIDE SEQUENCE [GENOMIC DNA]</scope>
    <source>
        <strain>Iso-1</strain>
    </source>
</reference>
<reference key="2">
    <citation type="journal article" date="2000" name="Science">
        <title>The genome sequence of Drosophila melanogaster.</title>
        <authorList>
            <person name="Adams M.D."/>
            <person name="Celniker S.E."/>
            <person name="Holt R.A."/>
            <person name="Evans C.A."/>
            <person name="Gocayne J.D."/>
            <person name="Amanatides P.G."/>
            <person name="Scherer S.E."/>
            <person name="Li P.W."/>
            <person name="Hoskins R.A."/>
            <person name="Galle R.F."/>
            <person name="George R.A."/>
            <person name="Lewis S.E."/>
            <person name="Richards S."/>
            <person name="Ashburner M."/>
            <person name="Henderson S.N."/>
            <person name="Sutton G.G."/>
            <person name="Wortman J.R."/>
            <person name="Yandell M.D."/>
            <person name="Zhang Q."/>
            <person name="Chen L.X."/>
            <person name="Brandon R.C."/>
            <person name="Rogers Y.-H.C."/>
            <person name="Blazej R.G."/>
            <person name="Champe M."/>
            <person name="Pfeiffer B.D."/>
            <person name="Wan K.H."/>
            <person name="Doyle C."/>
            <person name="Baxter E.G."/>
            <person name="Helt G."/>
            <person name="Nelson C.R."/>
            <person name="Miklos G.L.G."/>
            <person name="Abril J.F."/>
            <person name="Agbayani A."/>
            <person name="An H.-J."/>
            <person name="Andrews-Pfannkoch C."/>
            <person name="Baldwin D."/>
            <person name="Ballew R.M."/>
            <person name="Basu A."/>
            <person name="Baxendale J."/>
            <person name="Bayraktaroglu L."/>
            <person name="Beasley E.M."/>
            <person name="Beeson K.Y."/>
            <person name="Benos P.V."/>
            <person name="Berman B.P."/>
            <person name="Bhandari D."/>
            <person name="Bolshakov S."/>
            <person name="Borkova D."/>
            <person name="Botchan M.R."/>
            <person name="Bouck J."/>
            <person name="Brokstein P."/>
            <person name="Brottier P."/>
            <person name="Burtis K.C."/>
            <person name="Busam D.A."/>
            <person name="Butler H."/>
            <person name="Cadieu E."/>
            <person name="Center A."/>
            <person name="Chandra I."/>
            <person name="Cherry J.M."/>
            <person name="Cawley S."/>
            <person name="Dahlke C."/>
            <person name="Davenport L.B."/>
            <person name="Davies P."/>
            <person name="de Pablos B."/>
            <person name="Delcher A."/>
            <person name="Deng Z."/>
            <person name="Mays A.D."/>
            <person name="Dew I."/>
            <person name="Dietz S.M."/>
            <person name="Dodson K."/>
            <person name="Doup L.E."/>
            <person name="Downes M."/>
            <person name="Dugan-Rocha S."/>
            <person name="Dunkov B.C."/>
            <person name="Dunn P."/>
            <person name="Durbin K.J."/>
            <person name="Evangelista C.C."/>
            <person name="Ferraz C."/>
            <person name="Ferriera S."/>
            <person name="Fleischmann W."/>
            <person name="Fosler C."/>
            <person name="Gabrielian A.E."/>
            <person name="Garg N.S."/>
            <person name="Gelbart W.M."/>
            <person name="Glasser K."/>
            <person name="Glodek A."/>
            <person name="Gong F."/>
            <person name="Gorrell J.H."/>
            <person name="Gu Z."/>
            <person name="Guan P."/>
            <person name="Harris M."/>
            <person name="Harris N.L."/>
            <person name="Harvey D.A."/>
            <person name="Heiman T.J."/>
            <person name="Hernandez J.R."/>
            <person name="Houck J."/>
            <person name="Hostin D."/>
            <person name="Houston K.A."/>
            <person name="Howland T.J."/>
            <person name="Wei M.-H."/>
            <person name="Ibegwam C."/>
            <person name="Jalali M."/>
            <person name="Kalush F."/>
            <person name="Karpen G.H."/>
            <person name="Ke Z."/>
            <person name="Kennison J.A."/>
            <person name="Ketchum K.A."/>
            <person name="Kimmel B.E."/>
            <person name="Kodira C.D."/>
            <person name="Kraft C.L."/>
            <person name="Kravitz S."/>
            <person name="Kulp D."/>
            <person name="Lai Z."/>
            <person name="Lasko P."/>
            <person name="Lei Y."/>
            <person name="Levitsky A.A."/>
            <person name="Li J.H."/>
            <person name="Li Z."/>
            <person name="Liang Y."/>
            <person name="Lin X."/>
            <person name="Liu X."/>
            <person name="Mattei B."/>
            <person name="McIntosh T.C."/>
            <person name="McLeod M.P."/>
            <person name="McPherson D."/>
            <person name="Merkulov G."/>
            <person name="Milshina N.V."/>
            <person name="Mobarry C."/>
            <person name="Morris J."/>
            <person name="Moshrefi A."/>
            <person name="Mount S.M."/>
            <person name="Moy M."/>
            <person name="Murphy B."/>
            <person name="Murphy L."/>
            <person name="Muzny D.M."/>
            <person name="Nelson D.L."/>
            <person name="Nelson D.R."/>
            <person name="Nelson K.A."/>
            <person name="Nixon K."/>
            <person name="Nusskern D.R."/>
            <person name="Pacleb J.M."/>
            <person name="Palazzolo M."/>
            <person name="Pittman G.S."/>
            <person name="Pan S."/>
            <person name="Pollard J."/>
            <person name="Puri V."/>
            <person name="Reese M.G."/>
            <person name="Reinert K."/>
            <person name="Remington K."/>
            <person name="Saunders R.D.C."/>
            <person name="Scheeler F."/>
            <person name="Shen H."/>
            <person name="Shue B.C."/>
            <person name="Siden-Kiamos I."/>
            <person name="Simpson M."/>
            <person name="Skupski M.P."/>
            <person name="Smith T.J."/>
            <person name="Spier E."/>
            <person name="Spradling A.C."/>
            <person name="Stapleton M."/>
            <person name="Strong R."/>
            <person name="Sun E."/>
            <person name="Svirskas R."/>
            <person name="Tector C."/>
            <person name="Turner R."/>
            <person name="Venter E."/>
            <person name="Wang A.H."/>
            <person name="Wang X."/>
            <person name="Wang Z.-Y."/>
            <person name="Wassarman D.A."/>
            <person name="Weinstock G.M."/>
            <person name="Weissenbach J."/>
            <person name="Williams S.M."/>
            <person name="Woodage T."/>
            <person name="Worley K.C."/>
            <person name="Wu D."/>
            <person name="Yang S."/>
            <person name="Yao Q.A."/>
            <person name="Ye J."/>
            <person name="Yeh R.-F."/>
            <person name="Zaveri J.S."/>
            <person name="Zhan M."/>
            <person name="Zhang G."/>
            <person name="Zhao Q."/>
            <person name="Zheng L."/>
            <person name="Zheng X.H."/>
            <person name="Zhong F.N."/>
            <person name="Zhong W."/>
            <person name="Zhou X."/>
            <person name="Zhu S.C."/>
            <person name="Zhu X."/>
            <person name="Smith H.O."/>
            <person name="Gibbs R.A."/>
            <person name="Myers E.W."/>
            <person name="Rubin G.M."/>
            <person name="Venter J.C."/>
        </authorList>
    </citation>
    <scope>NUCLEOTIDE SEQUENCE [LARGE SCALE GENOMIC DNA]</scope>
    <source>
        <strain>Berkeley</strain>
    </source>
</reference>
<reference key="3">
    <citation type="journal article" date="2002" name="Genome Biol.">
        <title>Annotation of the Drosophila melanogaster euchromatic genome: a systematic review.</title>
        <authorList>
            <person name="Misra S."/>
            <person name="Crosby M.A."/>
            <person name="Mungall C.J."/>
            <person name="Matthews B.B."/>
            <person name="Campbell K.S."/>
            <person name="Hradecky P."/>
            <person name="Huang Y."/>
            <person name="Kaminker J.S."/>
            <person name="Millburn G.H."/>
            <person name="Prochnik S.E."/>
            <person name="Smith C.D."/>
            <person name="Tupy J.L."/>
            <person name="Whitfield E.J."/>
            <person name="Bayraktaroglu L."/>
            <person name="Berman B.P."/>
            <person name="Bettencourt B.R."/>
            <person name="Celniker S.E."/>
            <person name="de Grey A.D.N.J."/>
            <person name="Drysdale R.A."/>
            <person name="Harris N.L."/>
            <person name="Richter J."/>
            <person name="Russo S."/>
            <person name="Schroeder A.J."/>
            <person name="Shu S.Q."/>
            <person name="Stapleton M."/>
            <person name="Yamada C."/>
            <person name="Ashburner M."/>
            <person name="Gelbart W.M."/>
            <person name="Rubin G.M."/>
            <person name="Lewis S.E."/>
        </authorList>
    </citation>
    <scope>GENOME REANNOTATION</scope>
    <source>
        <strain>Berkeley</strain>
    </source>
</reference>
<reference key="4">
    <citation type="journal article" date="2002" name="Genome Biol.">
        <title>A Drosophila full-length cDNA resource.</title>
        <authorList>
            <person name="Stapleton M."/>
            <person name="Carlson J.W."/>
            <person name="Brokstein P."/>
            <person name="Yu C."/>
            <person name="Champe M."/>
            <person name="George R.A."/>
            <person name="Guarin H."/>
            <person name="Kronmiller B."/>
            <person name="Pacleb J.M."/>
            <person name="Park S."/>
            <person name="Wan K.H."/>
            <person name="Rubin G.M."/>
            <person name="Celniker S.E."/>
        </authorList>
    </citation>
    <scope>NUCLEOTIDE SEQUENCE [LARGE SCALE MRNA]</scope>
    <source>
        <strain>Berkeley</strain>
    </source>
</reference>
<reference key="5">
    <citation type="journal article" date="1998" name="Insect Biochem. Mol. Biol.">
        <title>Identification of proteins and developmental expression of RNAs encoded by the 65A cuticle protein gene cluster in Drosophila melanogaster.</title>
        <authorList>
            <person name="Charles J.-P."/>
            <person name="Chihara C."/>
            <person name="Nejad S."/>
            <person name="Riddiford L.M."/>
        </authorList>
    </citation>
    <scope>PROTEIN SEQUENCE OF 19-32</scope>
    <scope>FUNCTION</scope>
    <scope>DEVELOPMENTAL STAGE</scope>
    <source>
        <strain>Oregon-R</strain>
        <tissue>Larva</tissue>
    </source>
</reference>
<feature type="signal peptide" evidence="2">
    <location>
        <begin position="1"/>
        <end position="18"/>
    </location>
</feature>
<feature type="chain" id="PRO_0000444631" description="Larval cuticle protein 65Ab2">
    <location>
        <begin position="19"/>
        <end position="104"/>
    </location>
</feature>
<feature type="domain" description="Chitin-binding type R&amp;R" evidence="1">
    <location>
        <begin position="32"/>
        <end position="102"/>
    </location>
</feature>
<name>LCP52_DROME</name>
<evidence type="ECO:0000255" key="1">
    <source>
        <dbReference type="PROSITE-ProRule" id="PRU00497"/>
    </source>
</evidence>
<evidence type="ECO:0000269" key="2">
    <source>
    </source>
</evidence>
<evidence type="ECO:0000303" key="3">
    <source>
    </source>
</evidence>
<evidence type="ECO:0000303" key="4">
    <source>
    </source>
</evidence>
<evidence type="ECO:0000312" key="5">
    <source>
        <dbReference type="FlyBase" id="FBgn0020643"/>
    </source>
</evidence>
<sequence length="104" mass="11267">MKFLIVFVALFAMAVARPNLAEIVRQVSDVEPEKWSSDVETSDGTSIKQEGVLKNAGTDNEAAVVHGSFTWVDEKTGEKFTITYVADENGYQPQGAHLPVAPVA</sequence>
<organism>
    <name type="scientific">Drosophila melanogaster</name>
    <name type="common">Fruit fly</name>
    <dbReference type="NCBI Taxonomy" id="7227"/>
    <lineage>
        <taxon>Eukaryota</taxon>
        <taxon>Metazoa</taxon>
        <taxon>Ecdysozoa</taxon>
        <taxon>Arthropoda</taxon>
        <taxon>Hexapoda</taxon>
        <taxon>Insecta</taxon>
        <taxon>Pterygota</taxon>
        <taxon>Neoptera</taxon>
        <taxon>Endopterygota</taxon>
        <taxon>Diptera</taxon>
        <taxon>Brachycera</taxon>
        <taxon>Muscomorpha</taxon>
        <taxon>Ephydroidea</taxon>
        <taxon>Drosophilidae</taxon>
        <taxon>Drosophila</taxon>
        <taxon>Sophophora</taxon>
    </lineage>
</organism>
<gene>
    <name evidence="3 5" type="primary">Lcp65Ab2</name>
    <name evidence="4" type="synonym">Lcp-b2</name>
    <name evidence="3" type="synonym">Lcp5</name>
    <name evidence="5" type="ORF">CG18773</name>
</gene>
<protein>
    <recommendedName>
        <fullName evidence="3">Larval cuticle protein 65Ab2</fullName>
    </recommendedName>
    <alternativeName>
        <fullName evidence="3">Larval cuticle protein 5</fullName>
    </alternativeName>
</protein>
<accession>C0HL63</accession>
<accession>O96905</accession>
<accession>P92192</accession>
<comment type="function">
    <text evidence="2">Component of the cuticle of the larva.</text>
</comment>
<comment type="developmental stage">
    <text evidence="2">Expression begins at the end of second larval instar, present throughout third larval instar and is gone by the pupal stages.</text>
</comment>